<comment type="function">
    <text evidence="5">Required for the intracellular transport of organelles and vesicles, and is essential for the photoreceptor's outer segments formation, maintenance and function.</text>
</comment>
<comment type="subcellular location">
    <subcellularLocation>
        <location evidence="1">Cytoplasm</location>
        <location evidence="1">Cytoskeleton</location>
        <location evidence="1">Microtubule organizing center</location>
        <location evidence="1">Centrosome</location>
    </subcellularLocation>
    <subcellularLocation>
        <location evidence="1">Cytoplasm</location>
    </subcellularLocation>
</comment>
<comment type="disruption phenotype">
    <text evidence="5">Morpholino knockdown of the protein results in severe morphological defects including ventrally curved body axis, ventriculomegaly, pronephric cysts, expanded melanophores, small eyes and circling swimming behavior. In addition, morphans display shorter retinal photoreceptor outer segments (OS). In ninl morphants, in the inner segment (IS) malformations are also found including swollen Golgi complexes with enlarged and distended cisternae, accumulation of vesicle-like structures throughout the IS, large vacuoles and dispersed mitochondria.</text>
</comment>
<dbReference type="EMBL" id="JN232107">
    <property type="protein sequence ID" value="AER42434.1"/>
    <property type="molecule type" value="mRNA"/>
</dbReference>
<dbReference type="EMBL" id="BX255965">
    <property type="status" value="NOT_ANNOTATED_CDS"/>
    <property type="molecule type" value="Genomic_DNA"/>
</dbReference>
<dbReference type="EMBL" id="CABZ01067722">
    <property type="status" value="NOT_ANNOTATED_CDS"/>
    <property type="molecule type" value="Genomic_DNA"/>
</dbReference>
<dbReference type="RefSeq" id="NP_001268727.1">
    <property type="nucleotide sequence ID" value="NM_001281798.1"/>
</dbReference>
<dbReference type="SMR" id="G9G127"/>
<dbReference type="GeneID" id="561921"/>
<dbReference type="KEGG" id="dre:561921"/>
<dbReference type="AGR" id="ZFIN:ZDB-GENE-130530-768"/>
<dbReference type="CTD" id="22981"/>
<dbReference type="ZFIN" id="ZDB-GENE-130530-768">
    <property type="gene designation" value="ninl"/>
</dbReference>
<dbReference type="OrthoDB" id="5799458at2759"/>
<dbReference type="PRO" id="PR:G9G127"/>
<dbReference type="Proteomes" id="UP000000437">
    <property type="component" value="Chromosome 13"/>
</dbReference>
<dbReference type="GO" id="GO:0005813">
    <property type="term" value="C:centrosome"/>
    <property type="evidence" value="ECO:0007669"/>
    <property type="project" value="UniProtKB-SubCell"/>
</dbReference>
<dbReference type="GO" id="GO:0036064">
    <property type="term" value="C:ciliary basal body"/>
    <property type="evidence" value="ECO:0000314"/>
    <property type="project" value="ZFIN"/>
</dbReference>
<dbReference type="GO" id="GO:0005737">
    <property type="term" value="C:cytoplasm"/>
    <property type="evidence" value="ECO:0007669"/>
    <property type="project" value="UniProtKB-SubCell"/>
</dbReference>
<dbReference type="GO" id="GO:0005874">
    <property type="term" value="C:microtubule"/>
    <property type="evidence" value="ECO:0007669"/>
    <property type="project" value="UniProtKB-KW"/>
</dbReference>
<dbReference type="GO" id="GO:0005509">
    <property type="term" value="F:calcium ion binding"/>
    <property type="evidence" value="ECO:0007669"/>
    <property type="project" value="InterPro"/>
</dbReference>
<dbReference type="GO" id="GO:0042462">
    <property type="term" value="P:eye photoreceptor cell development"/>
    <property type="evidence" value="ECO:0000315"/>
    <property type="project" value="ZFIN"/>
</dbReference>
<dbReference type="GO" id="GO:0035845">
    <property type="term" value="P:photoreceptor cell outer segment organization"/>
    <property type="evidence" value="ECO:0000315"/>
    <property type="project" value="ZFIN"/>
</dbReference>
<dbReference type="CDD" id="cd00051">
    <property type="entry name" value="EFh"/>
    <property type="match status" value="1"/>
</dbReference>
<dbReference type="FunFam" id="1.10.238.10:FF:000209">
    <property type="entry name" value="Ninein like"/>
    <property type="match status" value="1"/>
</dbReference>
<dbReference type="Gene3D" id="1.10.238.10">
    <property type="entry name" value="EF-hand"/>
    <property type="match status" value="2"/>
</dbReference>
<dbReference type="InterPro" id="IPR011992">
    <property type="entry name" value="EF-hand-dom_pair"/>
</dbReference>
<dbReference type="InterPro" id="IPR018247">
    <property type="entry name" value="EF_Hand_1_Ca_BS"/>
</dbReference>
<dbReference type="InterPro" id="IPR002048">
    <property type="entry name" value="EF_hand_dom"/>
</dbReference>
<dbReference type="PANTHER" id="PTHR18905">
    <property type="entry name" value="NINEIN"/>
    <property type="match status" value="1"/>
</dbReference>
<dbReference type="PANTHER" id="PTHR18905:SF12">
    <property type="entry name" value="NINEIN-LIKE PROTEIN"/>
    <property type="match status" value="1"/>
</dbReference>
<dbReference type="Pfam" id="PF13202">
    <property type="entry name" value="EF-hand_5"/>
    <property type="match status" value="1"/>
</dbReference>
<dbReference type="SMART" id="SM00054">
    <property type="entry name" value="EFh"/>
    <property type="match status" value="2"/>
</dbReference>
<dbReference type="SUPFAM" id="SSF47473">
    <property type="entry name" value="EF-hand"/>
    <property type="match status" value="1"/>
</dbReference>
<dbReference type="PROSITE" id="PS00018">
    <property type="entry name" value="EF_HAND_1"/>
    <property type="match status" value="1"/>
</dbReference>
<dbReference type="PROSITE" id="PS50222">
    <property type="entry name" value="EF_HAND_2"/>
    <property type="match status" value="4"/>
</dbReference>
<keyword id="KW-0106">Calcium</keyword>
<keyword id="KW-0175">Coiled coil</keyword>
<keyword id="KW-0963">Cytoplasm</keyword>
<keyword id="KW-0206">Cytoskeleton</keyword>
<keyword id="KW-0479">Metal-binding</keyword>
<keyword id="KW-0493">Microtubule</keyword>
<keyword id="KW-0597">Phosphoprotein</keyword>
<keyword id="KW-1185">Reference proteome</keyword>
<keyword id="KW-0677">Repeat</keyword>
<reference key="1">
    <citation type="journal article" date="2015" name="PLoS Genet.">
        <title>The ciliopathy protein CC2D2A associates with NINL and functions in RAB8-MICAL3-regulated vesicle trafficking.</title>
        <authorList>
            <person name="Bachmann-Gagescu R."/>
            <person name="Dona M."/>
            <person name="Hetterschijt L."/>
            <person name="Tonnaer E."/>
            <person name="Peters T."/>
            <person name="de Vrieze E."/>
            <person name="Mans D.A."/>
            <person name="van Beersum S.E."/>
            <person name="Phelps I.G."/>
            <person name="Arts H.H."/>
            <person name="Keunen J.E."/>
            <person name="Ueffing M."/>
            <person name="Roepman R."/>
            <person name="Boldt K."/>
            <person name="Doherty D."/>
            <person name="Moens C.B."/>
            <person name="Neuhauss S.C."/>
            <person name="Kremer H."/>
            <person name="van Wijk E."/>
        </authorList>
    </citation>
    <scope>NUCLEOTIDE SEQUENCE [MRNA]</scope>
    <scope>SUBCELLULAR LOCATION</scope>
    <scope>DISRUPTION PHENOTYPE</scope>
    <scope>INTERACTION WITH CC2D2A</scope>
</reference>
<reference key="2">
    <citation type="journal article" date="2013" name="Nature">
        <title>The zebrafish reference genome sequence and its relationship to the human genome.</title>
        <authorList>
            <person name="Howe K."/>
            <person name="Clark M.D."/>
            <person name="Torroja C.F."/>
            <person name="Torrance J."/>
            <person name="Berthelot C."/>
            <person name="Muffato M."/>
            <person name="Collins J.E."/>
            <person name="Humphray S."/>
            <person name="McLaren K."/>
            <person name="Matthews L."/>
            <person name="McLaren S."/>
            <person name="Sealy I."/>
            <person name="Caccamo M."/>
            <person name="Churcher C."/>
            <person name="Scott C."/>
            <person name="Barrett J.C."/>
            <person name="Koch R."/>
            <person name="Rauch G.J."/>
            <person name="White S."/>
            <person name="Chow W."/>
            <person name="Kilian B."/>
            <person name="Quintais L.T."/>
            <person name="Guerra-Assuncao J.A."/>
            <person name="Zhou Y."/>
            <person name="Gu Y."/>
            <person name="Yen J."/>
            <person name="Vogel J.H."/>
            <person name="Eyre T."/>
            <person name="Redmond S."/>
            <person name="Banerjee R."/>
            <person name="Chi J."/>
            <person name="Fu B."/>
            <person name="Langley E."/>
            <person name="Maguire S.F."/>
            <person name="Laird G.K."/>
            <person name="Lloyd D."/>
            <person name="Kenyon E."/>
            <person name="Donaldson S."/>
            <person name="Sehra H."/>
            <person name="Almeida-King J."/>
            <person name="Loveland J."/>
            <person name="Trevanion S."/>
            <person name="Jones M."/>
            <person name="Quail M."/>
            <person name="Willey D."/>
            <person name="Hunt A."/>
            <person name="Burton J."/>
            <person name="Sims S."/>
            <person name="McLay K."/>
            <person name="Plumb B."/>
            <person name="Davis J."/>
            <person name="Clee C."/>
            <person name="Oliver K."/>
            <person name="Clark R."/>
            <person name="Riddle C."/>
            <person name="Elliot D."/>
            <person name="Threadgold G."/>
            <person name="Harden G."/>
            <person name="Ware D."/>
            <person name="Begum S."/>
            <person name="Mortimore B."/>
            <person name="Kerry G."/>
            <person name="Heath P."/>
            <person name="Phillimore B."/>
            <person name="Tracey A."/>
            <person name="Corby N."/>
            <person name="Dunn M."/>
            <person name="Johnson C."/>
            <person name="Wood J."/>
            <person name="Clark S."/>
            <person name="Pelan S."/>
            <person name="Griffiths G."/>
            <person name="Smith M."/>
            <person name="Glithero R."/>
            <person name="Howden P."/>
            <person name="Barker N."/>
            <person name="Lloyd C."/>
            <person name="Stevens C."/>
            <person name="Harley J."/>
            <person name="Holt K."/>
            <person name="Panagiotidis G."/>
            <person name="Lovell J."/>
            <person name="Beasley H."/>
            <person name="Henderson C."/>
            <person name="Gordon D."/>
            <person name="Auger K."/>
            <person name="Wright D."/>
            <person name="Collins J."/>
            <person name="Raisen C."/>
            <person name="Dyer L."/>
            <person name="Leung K."/>
            <person name="Robertson L."/>
            <person name="Ambridge K."/>
            <person name="Leongamornlert D."/>
            <person name="McGuire S."/>
            <person name="Gilderthorp R."/>
            <person name="Griffiths C."/>
            <person name="Manthravadi D."/>
            <person name="Nichol S."/>
            <person name="Barker G."/>
            <person name="Whitehead S."/>
            <person name="Kay M."/>
            <person name="Brown J."/>
            <person name="Murnane C."/>
            <person name="Gray E."/>
            <person name="Humphries M."/>
            <person name="Sycamore N."/>
            <person name="Barker D."/>
            <person name="Saunders D."/>
            <person name="Wallis J."/>
            <person name="Babbage A."/>
            <person name="Hammond S."/>
            <person name="Mashreghi-Mohammadi M."/>
            <person name="Barr L."/>
            <person name="Martin S."/>
            <person name="Wray P."/>
            <person name="Ellington A."/>
            <person name="Matthews N."/>
            <person name="Ellwood M."/>
            <person name="Woodmansey R."/>
            <person name="Clark G."/>
            <person name="Cooper J."/>
            <person name="Tromans A."/>
            <person name="Grafham D."/>
            <person name="Skuce C."/>
            <person name="Pandian R."/>
            <person name="Andrews R."/>
            <person name="Harrison E."/>
            <person name="Kimberley A."/>
            <person name="Garnett J."/>
            <person name="Fosker N."/>
            <person name="Hall R."/>
            <person name="Garner P."/>
            <person name="Kelly D."/>
            <person name="Bird C."/>
            <person name="Palmer S."/>
            <person name="Gehring I."/>
            <person name="Berger A."/>
            <person name="Dooley C.M."/>
            <person name="Ersan-Urun Z."/>
            <person name="Eser C."/>
            <person name="Geiger H."/>
            <person name="Geisler M."/>
            <person name="Karotki L."/>
            <person name="Kirn A."/>
            <person name="Konantz J."/>
            <person name="Konantz M."/>
            <person name="Oberlander M."/>
            <person name="Rudolph-Geiger S."/>
            <person name="Teucke M."/>
            <person name="Lanz C."/>
            <person name="Raddatz G."/>
            <person name="Osoegawa K."/>
            <person name="Zhu B."/>
            <person name="Rapp A."/>
            <person name="Widaa S."/>
            <person name="Langford C."/>
            <person name="Yang F."/>
            <person name="Schuster S.C."/>
            <person name="Carter N.P."/>
            <person name="Harrow J."/>
            <person name="Ning Z."/>
            <person name="Herrero J."/>
            <person name="Searle S.M."/>
            <person name="Enright A."/>
            <person name="Geisler R."/>
            <person name="Plasterk R.H."/>
            <person name="Lee C."/>
            <person name="Westerfield M."/>
            <person name="de Jong P.J."/>
            <person name="Zon L.I."/>
            <person name="Postlethwait J.H."/>
            <person name="Nusslein-Volhard C."/>
            <person name="Hubbard T.J."/>
            <person name="Roest Crollius H."/>
            <person name="Rogers J."/>
            <person name="Stemple D.L."/>
        </authorList>
    </citation>
    <scope>NUCLEOTIDE SEQUENCE [LARGE SCALE GENOMIC DNA]</scope>
    <source>
        <strain>Tuebingen</strain>
    </source>
</reference>
<reference key="3">
    <citation type="journal article" date="2015" name="PLoS Genet.">
        <title>NINL and DZANK1 Co-function in Vesicle Transport and Are Essential for Photoreceptor Development in Zebrafish.</title>
        <authorList>
            <person name="Dona M."/>
            <person name="Bachmann-Gagescu R."/>
            <person name="Texier Y."/>
            <person name="Toedt G."/>
            <person name="Hetterschijt L."/>
            <person name="Tonnaer E.L."/>
            <person name="Peters T.A."/>
            <person name="van Beersum S.E."/>
            <person name="Bergboer J.G."/>
            <person name="Horn N."/>
            <person name="de Vrieze E."/>
            <person name="Slijkerman R.W."/>
            <person name="van Reeuwijk J."/>
            <person name="Flik G."/>
            <person name="Keunen J.E."/>
            <person name="Ueffing M."/>
            <person name="Gibson T.J."/>
            <person name="Roepman R."/>
            <person name="Boldt K."/>
            <person name="Kremer H."/>
            <person name="van Wijk E."/>
        </authorList>
    </citation>
    <scope>DISRUPTION PHENOTYPE</scope>
    <scope>FUNCTION</scope>
    <scope>SUBUNIT</scope>
</reference>
<feature type="chain" id="PRO_0000459056" description="Ninein-like protein">
    <location>
        <begin position="1"/>
        <end position="1303"/>
    </location>
</feature>
<feature type="domain" description="EF-hand 1" evidence="3">
    <location>
        <begin position="8"/>
        <end position="43"/>
    </location>
</feature>
<feature type="domain" description="EF-hand 2" evidence="3">
    <location>
        <begin position="61"/>
        <end position="77"/>
    </location>
</feature>
<feature type="domain" description="EF-hand 3" evidence="3">
    <location>
        <begin position="203"/>
        <end position="238"/>
    </location>
</feature>
<feature type="domain" description="EF-hand 4" evidence="3">
    <location>
        <begin position="240"/>
        <end position="275"/>
    </location>
</feature>
<feature type="region of interest" description="Disordered" evidence="4">
    <location>
        <begin position="107"/>
        <end position="135"/>
    </location>
</feature>
<feature type="region of interest" description="Disordered" evidence="4">
    <location>
        <begin position="592"/>
        <end position="634"/>
    </location>
</feature>
<feature type="region of interest" description="Disordered" evidence="4">
    <location>
        <begin position="1156"/>
        <end position="1181"/>
    </location>
</feature>
<feature type="coiled-coil region" evidence="2">
    <location>
        <begin position="464"/>
        <end position="590"/>
    </location>
</feature>
<feature type="coiled-coil region" evidence="2">
    <location>
        <begin position="660"/>
        <end position="791"/>
    </location>
</feature>
<feature type="coiled-coil region" evidence="2">
    <location>
        <begin position="821"/>
        <end position="876"/>
    </location>
</feature>
<feature type="coiled-coil region" evidence="2">
    <location>
        <begin position="919"/>
        <end position="1146"/>
    </location>
</feature>
<feature type="coiled-coil region" evidence="2">
    <location>
        <begin position="1202"/>
        <end position="1278"/>
    </location>
</feature>
<feature type="compositionally biased region" description="Polar residues" evidence="4">
    <location>
        <begin position="592"/>
        <end position="617"/>
    </location>
</feature>
<feature type="compositionally biased region" description="Polar residues" evidence="4">
    <location>
        <begin position="1159"/>
        <end position="1175"/>
    </location>
</feature>
<feature type="binding site" evidence="3">
    <location>
        <position position="253"/>
    </location>
    <ligand>
        <name>Ca(2+)</name>
        <dbReference type="ChEBI" id="CHEBI:29108"/>
    </ligand>
</feature>
<feature type="binding site" evidence="3">
    <location>
        <position position="255"/>
    </location>
    <ligand>
        <name>Ca(2+)</name>
        <dbReference type="ChEBI" id="CHEBI:29108"/>
    </ligand>
</feature>
<feature type="binding site" evidence="3">
    <location>
        <position position="257"/>
    </location>
    <ligand>
        <name>Ca(2+)</name>
        <dbReference type="ChEBI" id="CHEBI:29108"/>
    </ligand>
</feature>
<feature type="binding site" evidence="3">
    <location>
        <position position="259"/>
    </location>
    <ligand>
        <name>Ca(2+)</name>
        <dbReference type="ChEBI" id="CHEBI:29108"/>
    </ligand>
</feature>
<feature type="binding site" evidence="3">
    <location>
        <position position="264"/>
    </location>
    <ligand>
        <name>Ca(2+)</name>
        <dbReference type="ChEBI" id="CHEBI:29108"/>
    </ligand>
</feature>
<protein>
    <recommendedName>
        <fullName>Ninein-like protein</fullName>
    </recommendedName>
</protein>
<organism>
    <name type="scientific">Danio rerio</name>
    <name type="common">Zebrafish</name>
    <name type="synonym">Brachydanio rerio</name>
    <dbReference type="NCBI Taxonomy" id="7955"/>
    <lineage>
        <taxon>Eukaryota</taxon>
        <taxon>Metazoa</taxon>
        <taxon>Chordata</taxon>
        <taxon>Craniata</taxon>
        <taxon>Vertebrata</taxon>
        <taxon>Euteleostomi</taxon>
        <taxon>Actinopterygii</taxon>
        <taxon>Neopterygii</taxon>
        <taxon>Teleostei</taxon>
        <taxon>Ostariophysi</taxon>
        <taxon>Cypriniformes</taxon>
        <taxon>Danionidae</taxon>
        <taxon>Danioninae</taxon>
        <taxon>Danio</taxon>
    </lineage>
</organism>
<accession>G9G127</accession>
<gene>
    <name type="primary">Ninl</name>
</gene>
<name>NINL_DANRE</name>
<proteinExistence type="evidence at protein level"/>
<evidence type="ECO:0000250" key="1">
    <source>
        <dbReference type="UniProtKB" id="Q9Y2I6"/>
    </source>
</evidence>
<evidence type="ECO:0000255" key="2"/>
<evidence type="ECO:0000255" key="3">
    <source>
        <dbReference type="PROSITE-ProRule" id="PRU00448"/>
    </source>
</evidence>
<evidence type="ECO:0000256" key="4">
    <source>
        <dbReference type="SAM" id="MobiDB-lite"/>
    </source>
</evidence>
<evidence type="ECO:0000269" key="5">
    <source>
    </source>
</evidence>
<sequence>MDEDEQNRYVAQLKDEFDSCDTTGTGYLDKEELTALCHKLSLDAHLPLLLDTLLGPQHYARVNFEEFKEGFVAVLSRSLDFSTSEEESSYLEPAVPEEVKPKYVKGTKRYGRRSRPDKTDLELTADSDSLPFGTDKVEANGVRRAKLRRSTSLESVESLKSDEDTGSNKESTHHYFVAQGQLKLWNQDGTGNCQRSSDNQQEVTDGQVRAVWEELGVGAAGSLNREELSLVCDHIGLKHLEAEELDALFRKLDKDQDGKVSLIEFQSGLFKPHDHASPLSTSTPARPKPLRTISKALEERVVRSTSPSLLSATVGQRLLTRLDDGSGCTSPEKVMALWTEEGIHNSRDILQTQTLDFSLEERLCLAELTLALDNELLVSGNGIHQAALVSYKNEINYLQVLADQACQERDKAKADLEQADRRNLQLVREVDDRHATMESLNESKIKDLEQEFRDKLTALRSESEYESEVLLEQVEKERERLRDELQLLRSQDISLQEDMCTTVNENRRLEEEVSALKEKLTEAESAISKLQNDLDRLLQDKYDGLDANGTGLLNQEEQFTEIFKEYEQQCRELQDRNDELCSELELLKSQGSGKRTRLSRSSLPANDWSNRRALTTESDSDDPEMKKGTSPQVRKKLQVTDKNVLGSLESLAPPVSIETELAMEKMKERYEQEVQDLKIQLETKVNFYERSMDLMRQNMEVERKDISQSFKMEISELEDLKARAEERAEQMRQTTERLEAELRGKTSGGAWGQEQERRIQRERAELEQNYAREISNLVLRLTSEKDQLEAELKLRMDREVLLVRAQLDEVTSENCALKDRLAVLQQDVKSLEEDVNNKRKKLEEMEKGYMKNREDEERLRKENSKCREEVLDLSARNLQLSSENAELSSRLCTDQRAVQTLTDRLAQVCQERDAAAVSSKQLQENLQQQENHGLRLQEQWRKEKELLERELQTAKEALQHLTVVESALTSQTLKNKSLEQDKESLLKETAENDQKLKKLQEALRNSETQIEQLNAQILTMWQEKDVHVQEAAAHIKMLQQSQDKVQELEERISQLRKEKEQVQHTHRLQEETAVSVLQNECKSLRVQNKELQNKVAQLQSRELELQRLTHECLTLRNKQAELETAKQEANQQAMRAESTRSMVQAQHTREIQELKEQMGSGTQEHASHLQTQLAEQQRRTQDFEDLLRSQAKQASVQMGLQQEQYEKLMASMQERMDEVEAKLKNTRVMLQEKVNQLKEQLAKNSKSDVLLKDLYVENSQLMKALQVTEQRQKSAEKKSFLLEEKVIALNKLLRKIAPASLTA</sequence>